<name>ILVD_SHEAM</name>
<keyword id="KW-0001">2Fe-2S</keyword>
<keyword id="KW-0028">Amino-acid biosynthesis</keyword>
<keyword id="KW-0100">Branched-chain amino acid biosynthesis</keyword>
<keyword id="KW-0408">Iron</keyword>
<keyword id="KW-0411">Iron-sulfur</keyword>
<keyword id="KW-0456">Lyase</keyword>
<keyword id="KW-0460">Magnesium</keyword>
<keyword id="KW-0479">Metal-binding</keyword>
<keyword id="KW-1185">Reference proteome</keyword>
<dbReference type="EC" id="4.2.1.9" evidence="1"/>
<dbReference type="EMBL" id="CP000507">
    <property type="protein sequence ID" value="ABM01482.1"/>
    <property type="molecule type" value="Genomic_DNA"/>
</dbReference>
<dbReference type="RefSeq" id="WP_011761386.1">
    <property type="nucleotide sequence ID" value="NC_008700.1"/>
</dbReference>
<dbReference type="SMR" id="A1SAS5"/>
<dbReference type="STRING" id="326297.Sama_3279"/>
<dbReference type="KEGG" id="saz:Sama_3279"/>
<dbReference type="eggNOG" id="COG0129">
    <property type="taxonomic scope" value="Bacteria"/>
</dbReference>
<dbReference type="HOGENOM" id="CLU_014271_4_2_6"/>
<dbReference type="OrthoDB" id="9807077at2"/>
<dbReference type="UniPathway" id="UPA00047">
    <property type="reaction ID" value="UER00057"/>
</dbReference>
<dbReference type="UniPathway" id="UPA00049">
    <property type="reaction ID" value="UER00061"/>
</dbReference>
<dbReference type="Proteomes" id="UP000009175">
    <property type="component" value="Chromosome"/>
</dbReference>
<dbReference type="GO" id="GO:0005829">
    <property type="term" value="C:cytosol"/>
    <property type="evidence" value="ECO:0007669"/>
    <property type="project" value="TreeGrafter"/>
</dbReference>
<dbReference type="GO" id="GO:0051537">
    <property type="term" value="F:2 iron, 2 sulfur cluster binding"/>
    <property type="evidence" value="ECO:0007669"/>
    <property type="project" value="UniProtKB-UniRule"/>
</dbReference>
<dbReference type="GO" id="GO:0004160">
    <property type="term" value="F:dihydroxy-acid dehydratase activity"/>
    <property type="evidence" value="ECO:0007669"/>
    <property type="project" value="UniProtKB-UniRule"/>
</dbReference>
<dbReference type="GO" id="GO:0000287">
    <property type="term" value="F:magnesium ion binding"/>
    <property type="evidence" value="ECO:0007669"/>
    <property type="project" value="UniProtKB-UniRule"/>
</dbReference>
<dbReference type="GO" id="GO:0009097">
    <property type="term" value="P:isoleucine biosynthetic process"/>
    <property type="evidence" value="ECO:0007669"/>
    <property type="project" value="UniProtKB-UniRule"/>
</dbReference>
<dbReference type="GO" id="GO:0009099">
    <property type="term" value="P:L-valine biosynthetic process"/>
    <property type="evidence" value="ECO:0007669"/>
    <property type="project" value="UniProtKB-UniRule"/>
</dbReference>
<dbReference type="FunFam" id="3.50.30.80:FF:000001">
    <property type="entry name" value="Dihydroxy-acid dehydratase"/>
    <property type="match status" value="1"/>
</dbReference>
<dbReference type="Gene3D" id="3.50.30.80">
    <property type="entry name" value="IlvD/EDD C-terminal domain-like"/>
    <property type="match status" value="1"/>
</dbReference>
<dbReference type="HAMAP" id="MF_00012">
    <property type="entry name" value="IlvD"/>
    <property type="match status" value="1"/>
</dbReference>
<dbReference type="InterPro" id="IPR042096">
    <property type="entry name" value="Dihydro-acid_dehy_C"/>
</dbReference>
<dbReference type="InterPro" id="IPR004404">
    <property type="entry name" value="DihydroxyA_deHydtase"/>
</dbReference>
<dbReference type="InterPro" id="IPR020558">
    <property type="entry name" value="DiOHA_6PGluconate_deHydtase_CS"/>
</dbReference>
<dbReference type="InterPro" id="IPR056740">
    <property type="entry name" value="ILV_EDD_C"/>
</dbReference>
<dbReference type="InterPro" id="IPR000581">
    <property type="entry name" value="ILV_EDD_N"/>
</dbReference>
<dbReference type="InterPro" id="IPR037237">
    <property type="entry name" value="IlvD/EDD_N"/>
</dbReference>
<dbReference type="NCBIfam" id="TIGR00110">
    <property type="entry name" value="ilvD"/>
    <property type="match status" value="1"/>
</dbReference>
<dbReference type="NCBIfam" id="NF009103">
    <property type="entry name" value="PRK12448.1"/>
    <property type="match status" value="1"/>
</dbReference>
<dbReference type="PANTHER" id="PTHR43661">
    <property type="entry name" value="D-XYLONATE DEHYDRATASE"/>
    <property type="match status" value="1"/>
</dbReference>
<dbReference type="PANTHER" id="PTHR43661:SF3">
    <property type="entry name" value="D-XYLONATE DEHYDRATASE YAGF-RELATED"/>
    <property type="match status" value="1"/>
</dbReference>
<dbReference type="Pfam" id="PF24877">
    <property type="entry name" value="ILV_EDD_C"/>
    <property type="match status" value="1"/>
</dbReference>
<dbReference type="Pfam" id="PF00920">
    <property type="entry name" value="ILVD_EDD_N"/>
    <property type="match status" value="1"/>
</dbReference>
<dbReference type="SUPFAM" id="SSF143975">
    <property type="entry name" value="IlvD/EDD N-terminal domain-like"/>
    <property type="match status" value="1"/>
</dbReference>
<dbReference type="SUPFAM" id="SSF52016">
    <property type="entry name" value="LeuD/IlvD-like"/>
    <property type="match status" value="1"/>
</dbReference>
<dbReference type="PROSITE" id="PS00886">
    <property type="entry name" value="ILVD_EDD_1"/>
    <property type="match status" value="1"/>
</dbReference>
<dbReference type="PROSITE" id="PS00887">
    <property type="entry name" value="ILVD_EDD_2"/>
    <property type="match status" value="1"/>
</dbReference>
<protein>
    <recommendedName>
        <fullName evidence="1">Dihydroxy-acid dehydratase</fullName>
        <shortName evidence="1">DAD</shortName>
        <ecNumber evidence="1">4.2.1.9</ecNumber>
    </recommendedName>
</protein>
<accession>A1SAS5</accession>
<comment type="function">
    <text evidence="1">Functions in the biosynthesis of branched-chain amino acids. Catalyzes the dehydration of (2R,3R)-2,3-dihydroxy-3-methylpentanoate (2,3-dihydroxy-3-methylvalerate) into 2-oxo-3-methylpentanoate (2-oxo-3-methylvalerate) and of (2R)-2,3-dihydroxy-3-methylbutanoate (2,3-dihydroxyisovalerate) into 2-oxo-3-methylbutanoate (2-oxoisovalerate), the penultimate precursor to L-isoleucine and L-valine, respectively.</text>
</comment>
<comment type="catalytic activity">
    <reaction evidence="1">
        <text>(2R)-2,3-dihydroxy-3-methylbutanoate = 3-methyl-2-oxobutanoate + H2O</text>
        <dbReference type="Rhea" id="RHEA:24809"/>
        <dbReference type="ChEBI" id="CHEBI:11851"/>
        <dbReference type="ChEBI" id="CHEBI:15377"/>
        <dbReference type="ChEBI" id="CHEBI:49072"/>
        <dbReference type="EC" id="4.2.1.9"/>
    </reaction>
    <physiologicalReaction direction="left-to-right" evidence="1">
        <dbReference type="Rhea" id="RHEA:24810"/>
    </physiologicalReaction>
</comment>
<comment type="catalytic activity">
    <reaction evidence="1">
        <text>(2R,3R)-2,3-dihydroxy-3-methylpentanoate = (S)-3-methyl-2-oxopentanoate + H2O</text>
        <dbReference type="Rhea" id="RHEA:27694"/>
        <dbReference type="ChEBI" id="CHEBI:15377"/>
        <dbReference type="ChEBI" id="CHEBI:35146"/>
        <dbReference type="ChEBI" id="CHEBI:49258"/>
        <dbReference type="EC" id="4.2.1.9"/>
    </reaction>
    <physiologicalReaction direction="left-to-right" evidence="1">
        <dbReference type="Rhea" id="RHEA:27695"/>
    </physiologicalReaction>
</comment>
<comment type="cofactor">
    <cofactor evidence="1">
        <name>[2Fe-2S] cluster</name>
        <dbReference type="ChEBI" id="CHEBI:190135"/>
    </cofactor>
    <text evidence="1">Binds 1 [2Fe-2S] cluster per subunit. This cluster acts as a Lewis acid cofactor.</text>
</comment>
<comment type="cofactor">
    <cofactor evidence="1">
        <name>Mg(2+)</name>
        <dbReference type="ChEBI" id="CHEBI:18420"/>
    </cofactor>
</comment>
<comment type="pathway">
    <text evidence="1">Amino-acid biosynthesis; L-isoleucine biosynthesis; L-isoleucine from 2-oxobutanoate: step 3/4.</text>
</comment>
<comment type="pathway">
    <text evidence="1">Amino-acid biosynthesis; L-valine biosynthesis; L-valine from pyruvate: step 3/4.</text>
</comment>
<comment type="subunit">
    <text evidence="1">Homodimer.</text>
</comment>
<comment type="similarity">
    <text evidence="1">Belongs to the IlvD/Edd family.</text>
</comment>
<gene>
    <name evidence="1" type="primary">ilvD</name>
    <name type="ordered locus">Sama_3279</name>
</gene>
<feature type="chain" id="PRO_1000001049" description="Dihydroxy-acid dehydratase">
    <location>
        <begin position="1"/>
        <end position="618"/>
    </location>
</feature>
<feature type="active site" description="Proton acceptor" evidence="1">
    <location>
        <position position="519"/>
    </location>
</feature>
<feature type="binding site" evidence="1">
    <location>
        <position position="81"/>
    </location>
    <ligand>
        <name>Mg(2+)</name>
        <dbReference type="ChEBI" id="CHEBI:18420"/>
    </ligand>
</feature>
<feature type="binding site" evidence="1">
    <location>
        <position position="122"/>
    </location>
    <ligand>
        <name>[2Fe-2S] cluster</name>
        <dbReference type="ChEBI" id="CHEBI:190135"/>
    </ligand>
</feature>
<feature type="binding site" evidence="1">
    <location>
        <position position="123"/>
    </location>
    <ligand>
        <name>Mg(2+)</name>
        <dbReference type="ChEBI" id="CHEBI:18420"/>
    </ligand>
</feature>
<feature type="binding site" description="via carbamate group" evidence="1">
    <location>
        <position position="124"/>
    </location>
    <ligand>
        <name>Mg(2+)</name>
        <dbReference type="ChEBI" id="CHEBI:18420"/>
    </ligand>
</feature>
<feature type="binding site" evidence="1">
    <location>
        <position position="195"/>
    </location>
    <ligand>
        <name>[2Fe-2S] cluster</name>
        <dbReference type="ChEBI" id="CHEBI:190135"/>
    </ligand>
</feature>
<feature type="binding site" evidence="1">
    <location>
        <position position="493"/>
    </location>
    <ligand>
        <name>Mg(2+)</name>
        <dbReference type="ChEBI" id="CHEBI:18420"/>
    </ligand>
</feature>
<feature type="modified residue" description="N6-carboxylysine" evidence="1">
    <location>
        <position position="124"/>
    </location>
</feature>
<reference key="1">
    <citation type="submission" date="2006-12" db="EMBL/GenBank/DDBJ databases">
        <title>Complete sequence of Shewanella amazonensis SB2B.</title>
        <authorList>
            <consortium name="US DOE Joint Genome Institute"/>
            <person name="Copeland A."/>
            <person name="Lucas S."/>
            <person name="Lapidus A."/>
            <person name="Barry K."/>
            <person name="Detter J.C."/>
            <person name="Glavina del Rio T."/>
            <person name="Hammon N."/>
            <person name="Israni S."/>
            <person name="Dalin E."/>
            <person name="Tice H."/>
            <person name="Pitluck S."/>
            <person name="Munk A.C."/>
            <person name="Brettin T."/>
            <person name="Bruce D."/>
            <person name="Han C."/>
            <person name="Tapia R."/>
            <person name="Gilna P."/>
            <person name="Schmutz J."/>
            <person name="Larimer F."/>
            <person name="Land M."/>
            <person name="Hauser L."/>
            <person name="Kyrpides N."/>
            <person name="Mikhailova N."/>
            <person name="Fredrickson J."/>
            <person name="Richardson P."/>
        </authorList>
    </citation>
    <scope>NUCLEOTIDE SEQUENCE [LARGE SCALE GENOMIC DNA]</scope>
    <source>
        <strain>ATCC BAA-1098 / SB2B</strain>
    </source>
</reference>
<sequence length="618" mass="65537">MAKLRSATSTEGRNMAGARALWRATGVKDTDFGKPIIAIANSFTQFVPGHVHLKDMGSLVASAIEEAGGIAKEFNTIAVDDGIAMGHGGMLYSLPSRELIADSVEYMVNAHCADALVCISNCDKITPGMLMAALRLNIPVVFVSGGPMEAGKTKLSDKLIKLDLVDAMVAAADDRISDADSEKIERSACPTCGSCSGMFTANSMNCLTEALGLSLPGNGSMLATHADRRELFLEAGRRVMKLAKRYYGDDDASVLPRSIASFKAFENAMALDVAMGGSSNTVLHLLAAAQEAEVDFTMDDIDRISRKVPHLCKVAPSTPKYHMEDVHRAGGVMAILGELDRAGLLHTDVNHVASEDGTLKSVLERFDVVLTKDEKVHEFFRAGPAGIPTTRAFSQSCRWDTLDDDRREGCIRSREFAFSQEGGLAVLSGNLAENGCIVKTAGVDESNLKFSGVARVYESQEDAVAGILGGEVVAGDVVVIRFEGPKGGPGMQEMLYPTSYLKSRGLGTQCALITDGRFSGGTSGLSIGHVSPEAASGGTIGLIENGDRIDIDIPGRSIKLLVSDAELESRRAAMNAKGPLAWKPLSRVRPVSMALKAYAMLATSADKGAVRDVSKLEG</sequence>
<evidence type="ECO:0000255" key="1">
    <source>
        <dbReference type="HAMAP-Rule" id="MF_00012"/>
    </source>
</evidence>
<proteinExistence type="inferred from homology"/>
<organism>
    <name type="scientific">Shewanella amazonensis (strain ATCC BAA-1098 / SB2B)</name>
    <dbReference type="NCBI Taxonomy" id="326297"/>
    <lineage>
        <taxon>Bacteria</taxon>
        <taxon>Pseudomonadati</taxon>
        <taxon>Pseudomonadota</taxon>
        <taxon>Gammaproteobacteria</taxon>
        <taxon>Alteromonadales</taxon>
        <taxon>Shewanellaceae</taxon>
        <taxon>Shewanella</taxon>
    </lineage>
</organism>